<organism>
    <name type="scientific">Oleidesulfovibrio alaskensis (strain ATCC BAA-1058 / DSM 17464 / G20)</name>
    <name type="common">Desulfovibrio alaskensis</name>
    <dbReference type="NCBI Taxonomy" id="207559"/>
    <lineage>
        <taxon>Bacteria</taxon>
        <taxon>Pseudomonadati</taxon>
        <taxon>Thermodesulfobacteriota</taxon>
        <taxon>Desulfovibrionia</taxon>
        <taxon>Desulfovibrionales</taxon>
        <taxon>Desulfovibrionaceae</taxon>
        <taxon>Oleidesulfovibrio</taxon>
    </lineage>
</organism>
<evidence type="ECO:0000255" key="1">
    <source>
        <dbReference type="HAMAP-Rule" id="MF_00042"/>
    </source>
</evidence>
<evidence type="ECO:0000255" key="2">
    <source>
        <dbReference type="PROSITE-ProRule" id="PRU00408"/>
    </source>
</evidence>
<evidence type="ECO:0000305" key="3"/>
<dbReference type="EC" id="3.1.26.4" evidence="1"/>
<dbReference type="EMBL" id="CP000112">
    <property type="protein sequence ID" value="ABB39735.2"/>
    <property type="status" value="ALT_INIT"/>
    <property type="molecule type" value="Genomic_DNA"/>
</dbReference>
<dbReference type="RefSeq" id="WP_027182448.1">
    <property type="nucleotide sequence ID" value="NC_007519.1"/>
</dbReference>
<dbReference type="SMR" id="Q30X61"/>
<dbReference type="STRING" id="207559.Dde_2941"/>
<dbReference type="KEGG" id="dde:Dde_2941"/>
<dbReference type="eggNOG" id="COG0328">
    <property type="taxonomic scope" value="Bacteria"/>
</dbReference>
<dbReference type="HOGENOM" id="CLU_030894_6_2_7"/>
<dbReference type="Proteomes" id="UP000002710">
    <property type="component" value="Chromosome"/>
</dbReference>
<dbReference type="GO" id="GO:0005737">
    <property type="term" value="C:cytoplasm"/>
    <property type="evidence" value="ECO:0007669"/>
    <property type="project" value="UniProtKB-SubCell"/>
</dbReference>
<dbReference type="GO" id="GO:0000287">
    <property type="term" value="F:magnesium ion binding"/>
    <property type="evidence" value="ECO:0007669"/>
    <property type="project" value="UniProtKB-UniRule"/>
</dbReference>
<dbReference type="GO" id="GO:0003676">
    <property type="term" value="F:nucleic acid binding"/>
    <property type="evidence" value="ECO:0007669"/>
    <property type="project" value="InterPro"/>
</dbReference>
<dbReference type="GO" id="GO:0004523">
    <property type="term" value="F:RNA-DNA hybrid ribonuclease activity"/>
    <property type="evidence" value="ECO:0007669"/>
    <property type="project" value="UniProtKB-UniRule"/>
</dbReference>
<dbReference type="GO" id="GO:0043137">
    <property type="term" value="P:DNA replication, removal of RNA primer"/>
    <property type="evidence" value="ECO:0007669"/>
    <property type="project" value="TreeGrafter"/>
</dbReference>
<dbReference type="CDD" id="cd09278">
    <property type="entry name" value="RNase_HI_prokaryote_like"/>
    <property type="match status" value="1"/>
</dbReference>
<dbReference type="FunFam" id="3.30.420.10:FF:000089">
    <property type="entry name" value="Ribonuclease H"/>
    <property type="match status" value="1"/>
</dbReference>
<dbReference type="Gene3D" id="3.30.420.10">
    <property type="entry name" value="Ribonuclease H-like superfamily/Ribonuclease H"/>
    <property type="match status" value="1"/>
</dbReference>
<dbReference type="HAMAP" id="MF_00042">
    <property type="entry name" value="RNase_H"/>
    <property type="match status" value="1"/>
</dbReference>
<dbReference type="InterPro" id="IPR050092">
    <property type="entry name" value="RNase_H"/>
</dbReference>
<dbReference type="InterPro" id="IPR012337">
    <property type="entry name" value="RNaseH-like_sf"/>
</dbReference>
<dbReference type="InterPro" id="IPR002156">
    <property type="entry name" value="RNaseH_domain"/>
</dbReference>
<dbReference type="InterPro" id="IPR036397">
    <property type="entry name" value="RNaseH_sf"/>
</dbReference>
<dbReference type="InterPro" id="IPR022892">
    <property type="entry name" value="RNaseHI"/>
</dbReference>
<dbReference type="NCBIfam" id="NF001236">
    <property type="entry name" value="PRK00203.1"/>
    <property type="match status" value="1"/>
</dbReference>
<dbReference type="PANTHER" id="PTHR10642">
    <property type="entry name" value="RIBONUCLEASE H1"/>
    <property type="match status" value="1"/>
</dbReference>
<dbReference type="PANTHER" id="PTHR10642:SF26">
    <property type="entry name" value="RIBONUCLEASE H1"/>
    <property type="match status" value="1"/>
</dbReference>
<dbReference type="Pfam" id="PF00075">
    <property type="entry name" value="RNase_H"/>
    <property type="match status" value="1"/>
</dbReference>
<dbReference type="SUPFAM" id="SSF53098">
    <property type="entry name" value="Ribonuclease H-like"/>
    <property type="match status" value="1"/>
</dbReference>
<dbReference type="PROSITE" id="PS50879">
    <property type="entry name" value="RNASE_H_1"/>
    <property type="match status" value="1"/>
</dbReference>
<proteinExistence type="inferred from homology"/>
<sequence>MKQVDIFTDGSCLGNPGPGGWAAVLRYAGTQKELGGGFSGTTNNRMEILAVIEGLEALQEPCTVNLYTDSQYVRNAVEKKWLDSWQRNGWKTAARKPVKNKDLWLRLLPLLARHTVKFHWVRGHSGHPENELCDTIARGHASRGGLPPDTQAAG</sequence>
<gene>
    <name evidence="1" type="primary">rnhA</name>
    <name type="ordered locus">Dde_2941</name>
</gene>
<comment type="function">
    <text evidence="1">Endonuclease that specifically degrades the RNA of RNA-DNA hybrids.</text>
</comment>
<comment type="catalytic activity">
    <reaction evidence="1">
        <text>Endonucleolytic cleavage to 5'-phosphomonoester.</text>
        <dbReference type="EC" id="3.1.26.4"/>
    </reaction>
</comment>
<comment type="cofactor">
    <cofactor evidence="1">
        <name>Mg(2+)</name>
        <dbReference type="ChEBI" id="CHEBI:18420"/>
    </cofactor>
    <text evidence="1">Binds 1 Mg(2+) ion per subunit. May bind a second metal ion at a regulatory site, or after substrate binding.</text>
</comment>
<comment type="subunit">
    <text evidence="1">Monomer.</text>
</comment>
<comment type="subcellular location">
    <subcellularLocation>
        <location evidence="1">Cytoplasm</location>
    </subcellularLocation>
</comment>
<comment type="similarity">
    <text evidence="1">Belongs to the RNase H family.</text>
</comment>
<comment type="sequence caution" evidence="3">
    <conflict type="erroneous initiation">
        <sequence resource="EMBL-CDS" id="ABB39735"/>
    </conflict>
    <text>Extended N-terminus.</text>
</comment>
<reference key="1">
    <citation type="journal article" date="2011" name="J. Bacteriol.">
        <title>Complete genome sequence and updated annotation of Desulfovibrio alaskensis G20.</title>
        <authorList>
            <person name="Hauser L.J."/>
            <person name="Land M.L."/>
            <person name="Brown S.D."/>
            <person name="Larimer F."/>
            <person name="Keller K.L."/>
            <person name="Rapp-Giles B.J."/>
            <person name="Price M.N."/>
            <person name="Lin M."/>
            <person name="Bruce D.C."/>
            <person name="Detter J.C."/>
            <person name="Tapia R."/>
            <person name="Han C.S."/>
            <person name="Goodwin L.A."/>
            <person name="Cheng J.F."/>
            <person name="Pitluck S."/>
            <person name="Copeland A."/>
            <person name="Lucas S."/>
            <person name="Nolan M."/>
            <person name="Lapidus A.L."/>
            <person name="Palumbo A.V."/>
            <person name="Wall J.D."/>
        </authorList>
    </citation>
    <scope>NUCLEOTIDE SEQUENCE [LARGE SCALE GENOMIC DNA]</scope>
    <source>
        <strain>ATCC BAA-1058 / DSM 17464 / G20</strain>
    </source>
</reference>
<protein>
    <recommendedName>
        <fullName evidence="1">Ribonuclease H</fullName>
        <shortName evidence="1">RNase H</shortName>
        <ecNumber evidence="1">3.1.26.4</ecNumber>
    </recommendedName>
</protein>
<feature type="chain" id="PRO_0000332589" description="Ribonuclease H">
    <location>
        <begin position="1"/>
        <end position="154"/>
    </location>
</feature>
<feature type="domain" description="RNase H type-1" evidence="2">
    <location>
        <begin position="1"/>
        <end position="142"/>
    </location>
</feature>
<feature type="binding site" evidence="1">
    <location>
        <position position="9"/>
    </location>
    <ligand>
        <name>Mg(2+)</name>
        <dbReference type="ChEBI" id="CHEBI:18420"/>
        <label>1</label>
    </ligand>
</feature>
<feature type="binding site" evidence="1">
    <location>
        <position position="9"/>
    </location>
    <ligand>
        <name>Mg(2+)</name>
        <dbReference type="ChEBI" id="CHEBI:18420"/>
        <label>2</label>
    </ligand>
</feature>
<feature type="binding site" evidence="1">
    <location>
        <position position="47"/>
    </location>
    <ligand>
        <name>Mg(2+)</name>
        <dbReference type="ChEBI" id="CHEBI:18420"/>
        <label>1</label>
    </ligand>
</feature>
<feature type="binding site" evidence="1">
    <location>
        <position position="69"/>
    </location>
    <ligand>
        <name>Mg(2+)</name>
        <dbReference type="ChEBI" id="CHEBI:18420"/>
        <label>1</label>
    </ligand>
</feature>
<feature type="binding site" evidence="1">
    <location>
        <position position="134"/>
    </location>
    <ligand>
        <name>Mg(2+)</name>
        <dbReference type="ChEBI" id="CHEBI:18420"/>
        <label>2</label>
    </ligand>
</feature>
<name>RNH_OLEA2</name>
<keyword id="KW-0963">Cytoplasm</keyword>
<keyword id="KW-0255">Endonuclease</keyword>
<keyword id="KW-0378">Hydrolase</keyword>
<keyword id="KW-0460">Magnesium</keyword>
<keyword id="KW-0479">Metal-binding</keyword>
<keyword id="KW-0540">Nuclease</keyword>
<keyword id="KW-1185">Reference proteome</keyword>
<accession>Q30X61</accession>